<reference key="1">
    <citation type="journal article" date="2009" name="PLoS Biol.">
        <title>Lineage-specific biology revealed by a finished genome assembly of the mouse.</title>
        <authorList>
            <person name="Church D.M."/>
            <person name="Goodstadt L."/>
            <person name="Hillier L.W."/>
            <person name="Zody M.C."/>
            <person name="Goldstein S."/>
            <person name="She X."/>
            <person name="Bult C.J."/>
            <person name="Agarwala R."/>
            <person name="Cherry J.L."/>
            <person name="DiCuccio M."/>
            <person name="Hlavina W."/>
            <person name="Kapustin Y."/>
            <person name="Meric P."/>
            <person name="Maglott D."/>
            <person name="Birtle Z."/>
            <person name="Marques A.C."/>
            <person name="Graves T."/>
            <person name="Zhou S."/>
            <person name="Teague B."/>
            <person name="Potamousis K."/>
            <person name="Churas C."/>
            <person name="Place M."/>
            <person name="Herschleb J."/>
            <person name="Runnheim R."/>
            <person name="Forrest D."/>
            <person name="Amos-Landgraf J."/>
            <person name="Schwartz D.C."/>
            <person name="Cheng Z."/>
            <person name="Lindblad-Toh K."/>
            <person name="Eichler E.E."/>
            <person name="Ponting C.P."/>
        </authorList>
    </citation>
    <scope>NUCLEOTIDE SEQUENCE [LARGE SCALE GENOMIC DNA]</scope>
    <source>
        <strain>C57BL/6J</strain>
    </source>
</reference>
<reference key="2">
    <citation type="journal article" date="1985" name="EMBO J.">
        <title>Analysis of mouse major urinary protein genes: variation between the exonic sequences of group 1 genes and a comparison with an active gene out with group 1 both suggest that gene conversion has occurred between MUP genes.</title>
        <authorList>
            <person name="Clark A.J."/>
            <person name="Chave-Cox A."/>
            <person name="Ma X."/>
            <person name="Bishop J.O."/>
        </authorList>
    </citation>
    <scope>NUCLEOTIDE SEQUENCE [MRNA] OF 31-181</scope>
    <source>
        <strain>BALB/cJ</strain>
        <tissue>Liver</tissue>
    </source>
</reference>
<reference key="3">
    <citation type="journal article" date="2008" name="PLoS ONE">
        <title>Species specificity in major urinary proteins by parallel evolution.</title>
        <authorList>
            <person name="Logan D.W."/>
            <person name="Marton T.F."/>
            <person name="Stowers L."/>
        </authorList>
    </citation>
    <scope>IDENTIFICATION</scope>
</reference>
<reference key="4">
    <citation type="journal article" date="2014" name="PLoS ONE">
        <title>The structure, stability and pheromone binding of the male mouse protein sex pheromone darcin.</title>
        <authorList>
            <person name="Phelan M.M."/>
            <person name="McLean L."/>
            <person name="Armstrong S.D."/>
            <person name="Hurst J.L."/>
            <person name="Beynon R.J."/>
            <person name="Lian L.Y."/>
        </authorList>
    </citation>
    <scope>STRUCTURE BY NMR OF 20-181</scope>
    <scope>FUNCTION</scope>
    <scope>DISULFIDE BOND</scope>
</reference>
<sequence>MKMLLLLLCLGLTLVCVHAEEASSTGRNFNVEKINGEWHTIILASDKREKIEDNGNFRLFLEQIHVLENSLVLKFHTVRDEECSELSMVADKTEKAGEYSVTYDGFNTFTIPKTDYDNFLMAHLINEKDGETFQLMGLYGREPDLSSDIKERFAQLCEEHGILRENIIDLSNANRCLQARE</sequence>
<dbReference type="EMBL" id="BX950196">
    <property type="status" value="NOT_ANNOTATED_CDS"/>
    <property type="molecule type" value="Genomic_DNA"/>
</dbReference>
<dbReference type="EMBL" id="X03524">
    <property type="protein sequence ID" value="CAA27227.1"/>
    <property type="molecule type" value="mRNA"/>
</dbReference>
<dbReference type="EMBL" id="X04115">
    <property type="protein sequence ID" value="CAA27729.1"/>
    <property type="molecule type" value="mRNA"/>
</dbReference>
<dbReference type="EMBL" id="M27609">
    <property type="protein sequence ID" value="AAA39765.1"/>
    <property type="molecule type" value="mRNA"/>
</dbReference>
<dbReference type="EMBL" id="BK006652">
    <property type="protein sequence ID" value="DAA06305.1"/>
    <property type="molecule type" value="Genomic_DNA"/>
</dbReference>
<dbReference type="PIR" id="S10124">
    <property type="entry name" value="S10124"/>
</dbReference>
<dbReference type="RefSeq" id="NP_001157998.1">
    <property type="nucleotide sequence ID" value="NM_001164526.1"/>
</dbReference>
<dbReference type="RefSeq" id="NP_001186262.1">
    <property type="nucleotide sequence ID" value="NM_001199333.1"/>
</dbReference>
<dbReference type="PDB" id="2LB6">
    <property type="method" value="NMR"/>
    <property type="chains" value="A=20-181"/>
</dbReference>
<dbReference type="PDBsum" id="2LB6"/>
<dbReference type="BMRB" id="P04938"/>
<dbReference type="SMR" id="P04938"/>
<dbReference type="FunCoup" id="P04938">
    <property type="interactions" value="18"/>
</dbReference>
<dbReference type="STRING" id="10090.ENSMUSP00000095648"/>
<dbReference type="Allergome" id="478">
    <property type="allergen name" value="Mus m 1"/>
</dbReference>
<dbReference type="PhosphoSitePlus" id="P04938"/>
<dbReference type="SwissPalm" id="P04938"/>
<dbReference type="jPOST" id="P04938"/>
<dbReference type="PaxDb" id="10090-ENSMUSP00000095648"/>
<dbReference type="PeptideAtlas" id="P04938"/>
<dbReference type="DNASU" id="100048884"/>
<dbReference type="Ensembl" id="ENSMUST00000098040.4">
    <property type="protein sequence ID" value="ENSMUSP00000095648.4"/>
    <property type="gene ID" value="ENSMUSG00000078674.3"/>
</dbReference>
<dbReference type="Ensembl" id="ENSMUST00000098046.10">
    <property type="protein sequence ID" value="ENSMUSP00000095654.4"/>
    <property type="gene ID" value="ENSMUSG00000073834.11"/>
</dbReference>
<dbReference type="GeneID" id="100039028"/>
<dbReference type="GeneID" id="100048884"/>
<dbReference type="KEGG" id="mmu:100039028"/>
<dbReference type="KEGG" id="mmu:100048884"/>
<dbReference type="AGR" id="MGI:3709617"/>
<dbReference type="CTD" id="100039028"/>
<dbReference type="CTD" id="100048884"/>
<dbReference type="MGI" id="MGI:3709617">
    <property type="gene designation" value="Mup11"/>
</dbReference>
<dbReference type="VEuPathDB" id="HostDB:ENSMUSG00000073834"/>
<dbReference type="VEuPathDB" id="HostDB:ENSMUSG00000078674"/>
<dbReference type="eggNOG" id="ENOG502S6GK">
    <property type="taxonomic scope" value="Eukaryota"/>
</dbReference>
<dbReference type="GeneTree" id="ENSGT01050000244868"/>
<dbReference type="InParanoid" id="P04938"/>
<dbReference type="OMA" id="ISEHDNM"/>
<dbReference type="PhylomeDB" id="P04938"/>
<dbReference type="BioGRID-ORCS" id="100039028">
    <property type="hits" value="2 hits in 13 CRISPR screens"/>
</dbReference>
<dbReference type="BioGRID-ORCS" id="100048884">
    <property type="hits" value="4 hits in 28 CRISPR screens"/>
</dbReference>
<dbReference type="ChiTaRS" id="Mup11">
    <property type="organism name" value="mouse"/>
</dbReference>
<dbReference type="EvolutionaryTrace" id="P04938"/>
<dbReference type="PRO" id="PR:P04938"/>
<dbReference type="Proteomes" id="UP000000589">
    <property type="component" value="Chromosome 4"/>
</dbReference>
<dbReference type="RNAct" id="P04938">
    <property type="molecule type" value="protein"/>
</dbReference>
<dbReference type="Bgee" id="ENSMUSG00000073834">
    <property type="expression patterns" value="Expressed in liver and 38 other cell types or tissues"/>
</dbReference>
<dbReference type="ExpressionAtlas" id="P04938">
    <property type="expression patterns" value="baseline and differential"/>
</dbReference>
<dbReference type="GO" id="GO:0005829">
    <property type="term" value="C:cytosol"/>
    <property type="evidence" value="ECO:0000250"/>
    <property type="project" value="UniProtKB"/>
</dbReference>
<dbReference type="GO" id="GO:0005615">
    <property type="term" value="C:extracellular space"/>
    <property type="evidence" value="ECO:0000250"/>
    <property type="project" value="UniProtKB"/>
</dbReference>
<dbReference type="GO" id="GO:0005634">
    <property type="term" value="C:nucleus"/>
    <property type="evidence" value="ECO:0000250"/>
    <property type="project" value="UniProtKB"/>
</dbReference>
<dbReference type="GO" id="GO:0005009">
    <property type="term" value="F:insulin receptor activity"/>
    <property type="evidence" value="ECO:0000250"/>
    <property type="project" value="UniProtKB"/>
</dbReference>
<dbReference type="GO" id="GO:0005550">
    <property type="term" value="F:pheromone binding"/>
    <property type="evidence" value="ECO:0000314"/>
    <property type="project" value="UniProtKB"/>
</dbReference>
<dbReference type="GO" id="GO:0036094">
    <property type="term" value="F:small molecule binding"/>
    <property type="evidence" value="ECO:0007669"/>
    <property type="project" value="InterPro"/>
</dbReference>
<dbReference type="GO" id="GO:0009060">
    <property type="term" value="P:aerobic respiration"/>
    <property type="evidence" value="ECO:0000250"/>
    <property type="project" value="UniProtKB"/>
</dbReference>
<dbReference type="GO" id="GO:0071396">
    <property type="term" value="P:cellular response to lipid"/>
    <property type="evidence" value="ECO:0000250"/>
    <property type="project" value="UniProtKB"/>
</dbReference>
<dbReference type="GO" id="GO:0071394">
    <property type="term" value="P:cellular response to testosterone stimulus"/>
    <property type="evidence" value="ECO:0000270"/>
    <property type="project" value="UniProtKB"/>
</dbReference>
<dbReference type="GO" id="GO:0006112">
    <property type="term" value="P:energy reserve metabolic process"/>
    <property type="evidence" value="ECO:0000250"/>
    <property type="project" value="UniProtKB"/>
</dbReference>
<dbReference type="GO" id="GO:0042593">
    <property type="term" value="P:glucose homeostasis"/>
    <property type="evidence" value="ECO:0000250"/>
    <property type="project" value="UniProtKB"/>
</dbReference>
<dbReference type="GO" id="GO:0031649">
    <property type="term" value="P:heat generation"/>
    <property type="evidence" value="ECO:0000250"/>
    <property type="project" value="UniProtKB"/>
</dbReference>
<dbReference type="GO" id="GO:0045475">
    <property type="term" value="P:locomotor rhythm"/>
    <property type="evidence" value="ECO:0000250"/>
    <property type="project" value="UniProtKB"/>
</dbReference>
<dbReference type="GO" id="GO:0007005">
    <property type="term" value="P:mitochondrion organization"/>
    <property type="evidence" value="ECO:0000250"/>
    <property type="project" value="UniProtKB"/>
</dbReference>
<dbReference type="GO" id="GO:0045892">
    <property type="term" value="P:negative regulation of DNA-templated transcription"/>
    <property type="evidence" value="ECO:0000250"/>
    <property type="project" value="UniProtKB"/>
</dbReference>
<dbReference type="GO" id="GO:0045721">
    <property type="term" value="P:negative regulation of gluconeogenesis"/>
    <property type="evidence" value="ECO:0000250"/>
    <property type="project" value="UniProtKB"/>
</dbReference>
<dbReference type="GO" id="GO:0061179">
    <property type="term" value="P:negative regulation of insulin secretion involved in cellular response to glucose stimulus"/>
    <property type="evidence" value="ECO:0000250"/>
    <property type="project" value="UniProtKB"/>
</dbReference>
<dbReference type="GO" id="GO:0051055">
    <property type="term" value="P:negative regulation of lipid biosynthetic process"/>
    <property type="evidence" value="ECO:0000250"/>
    <property type="project" value="UniProtKB"/>
</dbReference>
<dbReference type="GO" id="GO:0010888">
    <property type="term" value="P:negative regulation of lipid storage"/>
    <property type="evidence" value="ECO:0000250"/>
    <property type="project" value="UniProtKB"/>
</dbReference>
<dbReference type="GO" id="GO:0010628">
    <property type="term" value="P:positive regulation of gene expression"/>
    <property type="evidence" value="ECO:0000250"/>
    <property type="project" value="UniProtKB"/>
</dbReference>
<dbReference type="GO" id="GO:0010907">
    <property type="term" value="P:positive regulation of glucose metabolic process"/>
    <property type="evidence" value="ECO:0000250"/>
    <property type="project" value="UniProtKB"/>
</dbReference>
<dbReference type="GO" id="GO:0045834">
    <property type="term" value="P:positive regulation of lipid metabolic process"/>
    <property type="evidence" value="ECO:0000250"/>
    <property type="project" value="UniProtKB"/>
</dbReference>
<dbReference type="GO" id="GO:0051897">
    <property type="term" value="P:positive regulation of phosphatidylinositol 3-kinase/protein kinase B signal transduction"/>
    <property type="evidence" value="ECO:0000250"/>
    <property type="project" value="UniProtKB"/>
</dbReference>
<dbReference type="CDD" id="cd19428">
    <property type="entry name" value="lipocalin_MUP-like"/>
    <property type="match status" value="1"/>
</dbReference>
<dbReference type="FunFam" id="2.40.128.20:FF:000008">
    <property type="entry name" value="Major urinary protein"/>
    <property type="match status" value="1"/>
</dbReference>
<dbReference type="Gene3D" id="2.40.128.20">
    <property type="match status" value="1"/>
</dbReference>
<dbReference type="InterPro" id="IPR012674">
    <property type="entry name" value="Calycin"/>
</dbReference>
<dbReference type="InterPro" id="IPR002345">
    <property type="entry name" value="Lipocalin"/>
</dbReference>
<dbReference type="InterPro" id="IPR022272">
    <property type="entry name" value="Lipocalin_CS"/>
</dbReference>
<dbReference type="InterPro" id="IPR000566">
    <property type="entry name" value="Lipocln_cytosolic_FA-bd_dom"/>
</dbReference>
<dbReference type="InterPro" id="IPR002971">
    <property type="entry name" value="Maj_urinary"/>
</dbReference>
<dbReference type="PANTHER" id="PTHR11430">
    <property type="entry name" value="LIPOCALIN"/>
    <property type="match status" value="1"/>
</dbReference>
<dbReference type="PANTHER" id="PTHR11430:SF76">
    <property type="entry name" value="MAJOR URINARY PROTEIN 1-RELATED"/>
    <property type="match status" value="1"/>
</dbReference>
<dbReference type="Pfam" id="PF00061">
    <property type="entry name" value="Lipocalin"/>
    <property type="match status" value="1"/>
</dbReference>
<dbReference type="PRINTS" id="PR00179">
    <property type="entry name" value="LIPOCALIN"/>
</dbReference>
<dbReference type="PRINTS" id="PR01221">
    <property type="entry name" value="MAJORURINARY"/>
</dbReference>
<dbReference type="SUPFAM" id="SSF50814">
    <property type="entry name" value="Lipocalins"/>
    <property type="match status" value="1"/>
</dbReference>
<dbReference type="PROSITE" id="PS00213">
    <property type="entry name" value="LIPOCALIN"/>
    <property type="match status" value="1"/>
</dbReference>
<gene>
    <name evidence="6" type="primary">Mup11</name>
    <name evidence="4" type="synonym">Mup9</name>
</gene>
<keyword id="KW-0002">3D-structure</keyword>
<keyword id="KW-0085">Behavior</keyword>
<keyword id="KW-1015">Disulfide bond</keyword>
<keyword id="KW-0590">Pheromone-binding</keyword>
<keyword id="KW-1185">Reference proteome</keyword>
<keyword id="KW-0964">Secreted</keyword>
<keyword id="KW-0732">Signal</keyword>
<keyword id="KW-0813">Transport</keyword>
<comment type="function">
    <text evidence="3 5">Major urinary proteins (Mups) bind pheromones, and thus stabilize them to allow slow release into the air from urine marks. May protect pheromones from oxidation. May also act as pheromones themselves. In this context, they play a role in the regulation of social behaviors, such as aggression, mating, pup-suckling, territory establishment and dominance (Probable). Binds the pheromone analog 2-sec-butyl-4,5-dihydrothiazole (SBT) in vitro (PubMed:25279835).</text>
</comment>
<comment type="subcellular location">
    <subcellularLocation>
        <location evidence="1">Secreted</location>
    </subcellularLocation>
</comment>
<comment type="similarity">
    <text evidence="5">Belongs to the calycin superfamily. Lipocalin family.</text>
</comment>
<proteinExistence type="evidence at protein level"/>
<feature type="signal peptide" evidence="2">
    <location>
        <begin position="1"/>
        <end position="19"/>
    </location>
</feature>
<feature type="chain" id="PRO_0000201023" description="Major urinary protein 11" evidence="2">
    <location>
        <begin position="20"/>
        <end position="181"/>
    </location>
</feature>
<feature type="disulfide bond" evidence="3">
    <location>
        <begin position="83"/>
        <end position="176"/>
    </location>
</feature>
<feature type="sequence conflict" description="In Ref. 2; AAA39765/CAA27227." evidence="5" ref="2">
    <original>V</original>
    <variation>R</variation>
    <location>
        <position position="31"/>
    </location>
</feature>
<feature type="sequence conflict" description="In Ref. 2; CAA27729." evidence="5" ref="2">
    <original>N</original>
    <variation>K</variation>
    <location>
        <position position="69"/>
    </location>
</feature>
<feature type="sequence conflict" description="In Ref. 2; CAA27729." evidence="5" ref="2">
    <original>Q</original>
    <variation>K</variation>
    <location>
        <position position="155"/>
    </location>
</feature>
<feature type="turn" evidence="7">
    <location>
        <begin position="24"/>
        <end position="26"/>
    </location>
</feature>
<feature type="helix" evidence="7">
    <location>
        <begin position="31"/>
        <end position="34"/>
    </location>
</feature>
<feature type="strand" evidence="7">
    <location>
        <begin position="40"/>
        <end position="46"/>
    </location>
</feature>
<feature type="turn" evidence="7">
    <location>
        <begin position="48"/>
        <end position="50"/>
    </location>
</feature>
<feature type="strand" evidence="7">
    <location>
        <begin position="64"/>
        <end position="66"/>
    </location>
</feature>
<feature type="strand" evidence="7">
    <location>
        <begin position="71"/>
        <end position="76"/>
    </location>
</feature>
<feature type="strand" evidence="7">
    <location>
        <begin position="80"/>
        <end position="82"/>
    </location>
</feature>
<feature type="strand" evidence="7">
    <location>
        <begin position="85"/>
        <end position="91"/>
    </location>
</feature>
<feature type="strand" evidence="7">
    <location>
        <begin position="94"/>
        <end position="100"/>
    </location>
</feature>
<feature type="strand" evidence="7">
    <location>
        <begin position="104"/>
        <end position="110"/>
    </location>
</feature>
<feature type="turn" evidence="7">
    <location>
        <begin position="116"/>
        <end position="118"/>
    </location>
</feature>
<feature type="strand" evidence="7">
    <location>
        <begin position="119"/>
        <end position="121"/>
    </location>
</feature>
<feature type="strand" evidence="7">
    <location>
        <begin position="123"/>
        <end position="128"/>
    </location>
</feature>
<feature type="strand" evidence="7">
    <location>
        <begin position="131"/>
        <end position="144"/>
    </location>
</feature>
<feature type="turn" evidence="7">
    <location>
        <begin position="147"/>
        <end position="149"/>
    </location>
</feature>
<feature type="helix" evidence="7">
    <location>
        <begin position="150"/>
        <end position="157"/>
    </location>
</feature>
<feature type="turn" evidence="7">
    <location>
        <begin position="158"/>
        <end position="161"/>
    </location>
</feature>
<feature type="helix" evidence="7">
    <location>
        <begin position="164"/>
        <end position="166"/>
    </location>
</feature>
<feature type="strand" evidence="7">
    <location>
        <begin position="167"/>
        <end position="172"/>
    </location>
</feature>
<organism>
    <name type="scientific">Mus musculus</name>
    <name type="common">Mouse</name>
    <dbReference type="NCBI Taxonomy" id="10090"/>
    <lineage>
        <taxon>Eukaryota</taxon>
        <taxon>Metazoa</taxon>
        <taxon>Chordata</taxon>
        <taxon>Craniata</taxon>
        <taxon>Vertebrata</taxon>
        <taxon>Euteleostomi</taxon>
        <taxon>Mammalia</taxon>
        <taxon>Eutheria</taxon>
        <taxon>Euarchontoglires</taxon>
        <taxon>Glires</taxon>
        <taxon>Rodentia</taxon>
        <taxon>Myomorpha</taxon>
        <taxon>Muroidea</taxon>
        <taxon>Muridae</taxon>
        <taxon>Murinae</taxon>
        <taxon>Mus</taxon>
        <taxon>Mus</taxon>
    </lineage>
</organism>
<name>MUP11_MOUSE</name>
<accession>P04938</accession>
<protein>
    <recommendedName>
        <fullName evidence="5">Major urinary protein 11</fullName>
    </recommendedName>
</protein>
<evidence type="ECO:0000250" key="1">
    <source>
        <dbReference type="UniProtKB" id="Q5FW60"/>
    </source>
</evidence>
<evidence type="ECO:0000255" key="2"/>
<evidence type="ECO:0000269" key="3">
    <source>
    </source>
</evidence>
<evidence type="ECO:0000303" key="4">
    <source>
    </source>
</evidence>
<evidence type="ECO:0000305" key="5"/>
<evidence type="ECO:0000312" key="6">
    <source>
        <dbReference type="MGI" id="MGI:3709617"/>
    </source>
</evidence>
<evidence type="ECO:0007829" key="7">
    <source>
        <dbReference type="PDB" id="2LB6"/>
    </source>
</evidence>